<proteinExistence type="evidence at transcript level"/>
<comment type="function">
    <text evidence="1">Putative transcription factor that is required in photoreceptor cells precursors during eye development.</text>
</comment>
<comment type="subcellular location">
    <subcellularLocation>
        <location evidence="3">Nucleus</location>
    </subcellularLocation>
</comment>
<comment type="alternative products">
    <event type="alternative splicing"/>
    <isoform>
        <id>Q6PH18-1</id>
        <name>1</name>
        <sequence type="displayed"/>
    </isoform>
    <isoform>
        <id>Q6PH18-2</id>
        <name>2</name>
        <sequence type="described" ref="VSP_053051"/>
    </isoform>
</comment>
<comment type="tissue specificity">
    <text evidence="6">Expressed the retina, where expression is restricted to the outer nuclear layer.</text>
</comment>
<comment type="similarity">
    <text evidence="2">Belongs to the nuclear hormone receptor family. NR2 subfamily.</text>
</comment>
<keyword id="KW-0025">Alternative splicing</keyword>
<keyword id="KW-0238">DNA-binding</keyword>
<keyword id="KW-0479">Metal-binding</keyword>
<keyword id="KW-0539">Nucleus</keyword>
<keyword id="KW-0675">Receptor</keyword>
<keyword id="KW-1185">Reference proteome</keyword>
<keyword id="KW-0804">Transcription</keyword>
<keyword id="KW-0805">Transcription regulation</keyword>
<keyword id="KW-0862">Zinc</keyword>
<keyword id="KW-0863">Zinc-finger</keyword>
<dbReference type="EMBL" id="BC056748">
    <property type="protein sequence ID" value="AAH56748.1"/>
    <property type="molecule type" value="mRNA"/>
</dbReference>
<dbReference type="EMBL" id="BC065651">
    <property type="protein sequence ID" value="AAH65651.1"/>
    <property type="molecule type" value="mRNA"/>
</dbReference>
<dbReference type="RefSeq" id="NP_956886.1">
    <molecule id="Q6PH18-1"/>
    <property type="nucleotide sequence ID" value="NM_200592.1"/>
</dbReference>
<dbReference type="SMR" id="Q6PH18"/>
<dbReference type="FunCoup" id="Q6PH18">
    <property type="interactions" value="12"/>
</dbReference>
<dbReference type="STRING" id="7955.ENSDARP00000010118"/>
<dbReference type="PaxDb" id="7955-ENSDARP00000010118"/>
<dbReference type="Ensembl" id="ENSDART00000027242">
    <molecule id="Q6PH18-1"/>
    <property type="protein sequence ID" value="ENSDARP00000010118"/>
    <property type="gene ID" value="ENSDARG00000017168"/>
</dbReference>
<dbReference type="GeneID" id="393564"/>
<dbReference type="KEGG" id="dre:393564"/>
<dbReference type="AGR" id="ZFIN:ZDB-GENE-040426-1438"/>
<dbReference type="CTD" id="393564"/>
<dbReference type="ZFIN" id="ZDB-GENE-040426-1438">
    <property type="gene designation" value="nr2f1b"/>
</dbReference>
<dbReference type="eggNOG" id="KOG3575">
    <property type="taxonomic scope" value="Eukaryota"/>
</dbReference>
<dbReference type="HOGENOM" id="CLU_007368_20_1_1"/>
<dbReference type="InParanoid" id="Q6PH18"/>
<dbReference type="OMA" id="MALLACK"/>
<dbReference type="OrthoDB" id="5873264at2759"/>
<dbReference type="PhylomeDB" id="Q6PH18"/>
<dbReference type="TreeFam" id="TF352097"/>
<dbReference type="PRO" id="PR:Q6PH18"/>
<dbReference type="Proteomes" id="UP000000437">
    <property type="component" value="Chromosome 10"/>
</dbReference>
<dbReference type="Bgee" id="ENSDARG00000017168">
    <property type="expression patterns" value="Expressed in ventricular system of central nervous system and 66 other cell types or tissues"/>
</dbReference>
<dbReference type="GO" id="GO:0005634">
    <property type="term" value="C:nucleus"/>
    <property type="evidence" value="ECO:0007669"/>
    <property type="project" value="UniProtKB-SubCell"/>
</dbReference>
<dbReference type="GO" id="GO:0004879">
    <property type="term" value="F:nuclear receptor activity"/>
    <property type="evidence" value="ECO:0000318"/>
    <property type="project" value="GO_Central"/>
</dbReference>
<dbReference type="GO" id="GO:0000978">
    <property type="term" value="F:RNA polymerase II cis-regulatory region sequence-specific DNA binding"/>
    <property type="evidence" value="ECO:0000318"/>
    <property type="project" value="GO_Central"/>
</dbReference>
<dbReference type="GO" id="GO:0008270">
    <property type="term" value="F:zinc ion binding"/>
    <property type="evidence" value="ECO:0007669"/>
    <property type="project" value="UniProtKB-KW"/>
</dbReference>
<dbReference type="GO" id="GO:0035476">
    <property type="term" value="P:angioblast cell migration"/>
    <property type="evidence" value="ECO:0000315"/>
    <property type="project" value="CACAO"/>
</dbReference>
<dbReference type="GO" id="GO:0035284">
    <property type="term" value="P:brain segmentation"/>
    <property type="evidence" value="ECO:0000315"/>
    <property type="project" value="ZFIN"/>
</dbReference>
<dbReference type="GO" id="GO:0030154">
    <property type="term" value="P:cell differentiation"/>
    <property type="evidence" value="ECO:0000318"/>
    <property type="project" value="GO_Central"/>
</dbReference>
<dbReference type="GO" id="GO:1904888">
    <property type="term" value="P:cranial skeletal system development"/>
    <property type="evidence" value="ECO:0000316"/>
    <property type="project" value="ZFIN"/>
</dbReference>
<dbReference type="GO" id="GO:0000122">
    <property type="term" value="P:negative regulation of transcription by RNA polymerase II"/>
    <property type="evidence" value="ECO:0000318"/>
    <property type="project" value="GO_Central"/>
</dbReference>
<dbReference type="GO" id="GO:0007399">
    <property type="term" value="P:nervous system development"/>
    <property type="evidence" value="ECO:0000318"/>
    <property type="project" value="GO_Central"/>
</dbReference>
<dbReference type="GO" id="GO:0001944">
    <property type="term" value="P:vasculature development"/>
    <property type="evidence" value="ECO:0000315"/>
    <property type="project" value="ZFIN"/>
</dbReference>
<dbReference type="GO" id="GO:0060841">
    <property type="term" value="P:venous blood vessel development"/>
    <property type="evidence" value="ECO:0000315"/>
    <property type="project" value="ZFIN"/>
</dbReference>
<dbReference type="CDD" id="cd06958">
    <property type="entry name" value="NR_DBD_COUP_TF"/>
    <property type="match status" value="1"/>
</dbReference>
<dbReference type="CDD" id="cd06948">
    <property type="entry name" value="NR_LBD_COUP-TF"/>
    <property type="match status" value="1"/>
</dbReference>
<dbReference type="FunFam" id="1.10.565.10:FF:000003">
    <property type="entry name" value="Coup transcription factor 2 isoform 1"/>
    <property type="match status" value="1"/>
</dbReference>
<dbReference type="FunFam" id="3.30.50.10:FF:000016">
    <property type="entry name" value="Nuclear receptor subfamily 2 group F member 1"/>
    <property type="match status" value="1"/>
</dbReference>
<dbReference type="Gene3D" id="3.30.50.10">
    <property type="entry name" value="Erythroid Transcription Factor GATA-1, subunit A"/>
    <property type="match status" value="1"/>
</dbReference>
<dbReference type="Gene3D" id="1.10.565.10">
    <property type="entry name" value="Retinoid X Receptor"/>
    <property type="match status" value="1"/>
</dbReference>
<dbReference type="InterPro" id="IPR035500">
    <property type="entry name" value="NHR-like_dom_sf"/>
</dbReference>
<dbReference type="InterPro" id="IPR000536">
    <property type="entry name" value="Nucl_hrmn_rcpt_lig-bd"/>
</dbReference>
<dbReference type="InterPro" id="IPR050274">
    <property type="entry name" value="Nuclear_hormone_rcpt_NR2"/>
</dbReference>
<dbReference type="InterPro" id="IPR001723">
    <property type="entry name" value="Nuclear_hrmn_rcpt"/>
</dbReference>
<dbReference type="InterPro" id="IPR001628">
    <property type="entry name" value="Znf_hrmn_rcpt"/>
</dbReference>
<dbReference type="InterPro" id="IPR013088">
    <property type="entry name" value="Znf_NHR/GATA"/>
</dbReference>
<dbReference type="PANTHER" id="PTHR24083">
    <property type="entry name" value="NUCLEAR HORMONE RECEPTOR"/>
    <property type="match status" value="1"/>
</dbReference>
<dbReference type="Pfam" id="PF00104">
    <property type="entry name" value="Hormone_recep"/>
    <property type="match status" value="1"/>
</dbReference>
<dbReference type="Pfam" id="PF00105">
    <property type="entry name" value="zf-C4"/>
    <property type="match status" value="1"/>
</dbReference>
<dbReference type="PRINTS" id="PR01282">
    <property type="entry name" value="COUPTNFACTOR"/>
</dbReference>
<dbReference type="PRINTS" id="PR00398">
    <property type="entry name" value="STRDHORMONER"/>
</dbReference>
<dbReference type="PRINTS" id="PR00047">
    <property type="entry name" value="STROIDFINGER"/>
</dbReference>
<dbReference type="SMART" id="SM00430">
    <property type="entry name" value="HOLI"/>
    <property type="match status" value="1"/>
</dbReference>
<dbReference type="SMART" id="SM00399">
    <property type="entry name" value="ZnF_C4"/>
    <property type="match status" value="1"/>
</dbReference>
<dbReference type="SUPFAM" id="SSF57716">
    <property type="entry name" value="Glucocorticoid receptor-like (DNA-binding domain)"/>
    <property type="match status" value="1"/>
</dbReference>
<dbReference type="SUPFAM" id="SSF48508">
    <property type="entry name" value="Nuclear receptor ligand-binding domain"/>
    <property type="match status" value="1"/>
</dbReference>
<dbReference type="PROSITE" id="PS51843">
    <property type="entry name" value="NR_LBD"/>
    <property type="match status" value="1"/>
</dbReference>
<dbReference type="PROSITE" id="PS00031">
    <property type="entry name" value="NUCLEAR_REC_DBD_1"/>
    <property type="match status" value="1"/>
</dbReference>
<dbReference type="PROSITE" id="PS51030">
    <property type="entry name" value="NUCLEAR_REC_DBD_2"/>
    <property type="match status" value="1"/>
</dbReference>
<organism>
    <name type="scientific">Danio rerio</name>
    <name type="common">Zebrafish</name>
    <name type="synonym">Brachydanio rerio</name>
    <dbReference type="NCBI Taxonomy" id="7955"/>
    <lineage>
        <taxon>Eukaryota</taxon>
        <taxon>Metazoa</taxon>
        <taxon>Chordata</taxon>
        <taxon>Craniata</taxon>
        <taxon>Vertebrata</taxon>
        <taxon>Euteleostomi</taxon>
        <taxon>Actinopterygii</taxon>
        <taxon>Neopterygii</taxon>
        <taxon>Teleostei</taxon>
        <taxon>Ostariophysi</taxon>
        <taxon>Cypriniformes</taxon>
        <taxon>Danionidae</taxon>
        <taxon>Danioninae</taxon>
        <taxon>Danio</taxon>
    </lineage>
</organism>
<evidence type="ECO:0000250" key="1"/>
<evidence type="ECO:0000255" key="2"/>
<evidence type="ECO:0000255" key="3">
    <source>
        <dbReference type="PROSITE-ProRule" id="PRU00407"/>
    </source>
</evidence>
<evidence type="ECO:0000255" key="4">
    <source>
        <dbReference type="PROSITE-ProRule" id="PRU01189"/>
    </source>
</evidence>
<evidence type="ECO:0000256" key="5">
    <source>
        <dbReference type="SAM" id="MobiDB-lite"/>
    </source>
</evidence>
<evidence type="ECO:0000269" key="6">
    <source>
    </source>
</evidence>
<evidence type="ECO:0000303" key="7">
    <source>
    </source>
</evidence>
<evidence type="ECO:0000303" key="8">
    <source ref="1"/>
</evidence>
<evidence type="ECO:0000305" key="9"/>
<evidence type="ECO:0000312" key="10">
    <source>
        <dbReference type="EMBL" id="AAH56748.1"/>
    </source>
</evidence>
<evidence type="ECO:0000312" key="11">
    <source>
        <dbReference type="EMBL" id="AAH65651.1"/>
    </source>
</evidence>
<evidence type="ECO:0000312" key="12">
    <source>
        <dbReference type="ZFIN" id="ZDB-GENE-040426-1438"/>
    </source>
</evidence>
<reference evidence="9 11" key="1">
    <citation type="submission" date="2004-01" db="EMBL/GenBank/DDBJ databases">
        <authorList>
            <consortium name="NIH - Zebrafish Gene Collection (ZGC) project"/>
        </authorList>
    </citation>
    <scope>NUCLEOTIDE SEQUENCE [LARGE SCALE MRNA] (ISOFORMS 1 AND 2)</scope>
    <source>
        <tissue evidence="11">Embryo</tissue>
    </source>
</reference>
<reference evidence="9" key="2">
    <citation type="journal article" date="2007" name="PLoS Genet.">
        <title>Unexpected novel relational links uncovered by extensive developmental profiling of nuclear receptor expression.</title>
        <authorList>
            <person name="Bertrand S."/>
            <person name="Thisse B."/>
            <person name="Tavares R."/>
            <person name="Sachs L."/>
            <person name="Chaumot A."/>
            <person name="Bardet P.-L."/>
            <person name="Escriva H."/>
            <person name="Duffraisse M."/>
            <person name="Marchand O."/>
            <person name="Safi R."/>
            <person name="Thisse C."/>
            <person name="Laudet V."/>
        </authorList>
    </citation>
    <scope>TISSUE SPECIFICITY</scope>
</reference>
<protein>
    <recommendedName>
        <fullName evidence="10">Nuclear receptor subfamily 2 group F member 1-B</fullName>
    </recommendedName>
    <alternativeName>
        <fullName evidence="7">COUP transcription factor 1-B</fullName>
        <shortName evidence="7">COUP-TFalpha-B</shortName>
    </alternativeName>
</protein>
<gene>
    <name evidence="12" type="primary">nr2f1b</name>
    <name evidence="12" type="synonym">nr2f1l</name>
    <name type="ORF">zgc:77353</name>
</gene>
<feature type="chain" id="PRO_0000367031" description="Nuclear receptor subfamily 2 group F member 1-B">
    <location>
        <begin position="1"/>
        <end position="389"/>
    </location>
</feature>
<feature type="domain" description="NR LBD" evidence="4">
    <location>
        <begin position="152"/>
        <end position="378"/>
    </location>
</feature>
<feature type="DNA-binding region" description="Nuclear receptor" evidence="3">
    <location>
        <begin position="51"/>
        <end position="126"/>
    </location>
</feature>
<feature type="zinc finger region" description="NR C4-type" evidence="3">
    <location>
        <begin position="54"/>
        <end position="74"/>
    </location>
</feature>
<feature type="zinc finger region" description="NR C4-type" evidence="3">
    <location>
        <begin position="90"/>
        <end position="109"/>
    </location>
</feature>
<feature type="region of interest" description="Disordered" evidence="5">
    <location>
        <begin position="19"/>
        <end position="39"/>
    </location>
</feature>
<feature type="splice variant" id="VSP_053051" description="In isoform 2." evidence="8">
    <location>
        <position position="123"/>
    </location>
</feature>
<accession>Q6PH18</accession>
<accession>Q6P0E6</accession>
<sequence>MAMVVSAWRDPQEELAAVDDQSAAGREHLQHRHSPKSAEEKAQIAAQNQQHVECVVCGDKSSGKHYGQFTCEGCKSFFKRSVRRNLSYTCRANRNCPVDQHHRNQCQYCRLKKCLKVGMRREAVQRGRMPPNQPNPSHYALTNGDHLNGQCYLSGYISLLLRAEPYPASRYGNQCMQSGNIMGIENICELAARLLFSAVEWARNIPFFPDLQITDQVSLLRLTWSELFVLNAAQSSMPLHVAPLLAAAGLHASPMSADRVVAFMDHIRFFQEQVEKLKALQVDSAEYSCAKAIVLFTSDACGLSDIPHIEGLQEKSQCALEEYVRSQYPNQPTRFGKLLLRLPALRMVSSSVIEQLFFVRLVGKTPIETLIRDMLLSGSSFNWPYMPIQ</sequence>
<name>N2F1B_DANRE</name>